<comment type="function">
    <text>This highly disulfide-bonded protein is a potent inhibitor of factor Xa. Facilitates digestion of tissues and may also protect the gastric tissues from its own digestive enzymes. May have therapeutic utility as an anticoagulant. Also exhibits a strong metastatic activity.</text>
</comment>
<comment type="subcellular location">
    <subcellularLocation>
        <location>Secreted</location>
    </subcellularLocation>
</comment>
<comment type="tissue specificity">
    <text>Gland cells. It is more strongly expressed in the head than in the gastric tissue.</text>
</comment>
<comment type="similarity">
    <text evidence="4">Belongs to the protease inhibitor I15 (antistasin) family.</text>
</comment>
<name>ANTA_HYDVU</name>
<keyword id="KW-0358">Heparin-binding</keyword>
<keyword id="KW-0646">Protease inhibitor</keyword>
<keyword id="KW-1185">Reference proteome</keyword>
<keyword id="KW-0677">Repeat</keyword>
<keyword id="KW-0964">Secreted</keyword>
<keyword id="KW-0722">Serine protease inhibitor</keyword>
<keyword id="KW-0732">Signal</keyword>
<evidence type="ECO:0000250" key="1"/>
<evidence type="ECO:0000255" key="2"/>
<evidence type="ECO:0000255" key="3">
    <source>
        <dbReference type="PROSITE-ProRule" id="PRU00582"/>
    </source>
</evidence>
<evidence type="ECO:0000305" key="4"/>
<proteinExistence type="evidence at transcript level"/>
<organism>
    <name type="scientific">Hydra vulgaris</name>
    <name type="common">Hydra</name>
    <name type="synonym">Hydra attenuata</name>
    <dbReference type="NCBI Taxonomy" id="6087"/>
    <lineage>
        <taxon>Eukaryota</taxon>
        <taxon>Metazoa</taxon>
        <taxon>Cnidaria</taxon>
        <taxon>Hydrozoa</taxon>
        <taxon>Hydroidolina</taxon>
        <taxon>Anthoathecata</taxon>
        <taxon>Aplanulata</taxon>
        <taxon>Hydridae</taxon>
        <taxon>Hydra</taxon>
    </lineage>
</organism>
<dbReference type="EMBL" id="X67590">
    <property type="protein sequence ID" value="CAA47864.1"/>
    <property type="molecule type" value="mRNA"/>
</dbReference>
<dbReference type="PIR" id="S29195">
    <property type="entry name" value="S29195"/>
</dbReference>
<dbReference type="SMR" id="P38977"/>
<dbReference type="MEROPS" id="I15.003"/>
<dbReference type="OrthoDB" id="6019565at2759"/>
<dbReference type="Proteomes" id="UP000694840">
    <property type="component" value="Unplaced"/>
</dbReference>
<dbReference type="GO" id="GO:0005576">
    <property type="term" value="C:extracellular region"/>
    <property type="evidence" value="ECO:0007669"/>
    <property type="project" value="UniProtKB-SubCell"/>
</dbReference>
<dbReference type="GO" id="GO:0005886">
    <property type="term" value="C:plasma membrane"/>
    <property type="evidence" value="ECO:0007669"/>
    <property type="project" value="TreeGrafter"/>
</dbReference>
<dbReference type="GO" id="GO:0008201">
    <property type="term" value="F:heparin binding"/>
    <property type="evidence" value="ECO:0007669"/>
    <property type="project" value="UniProtKB-KW"/>
</dbReference>
<dbReference type="GO" id="GO:0004867">
    <property type="term" value="F:serine-type endopeptidase inhibitor activity"/>
    <property type="evidence" value="ECO:0007669"/>
    <property type="project" value="UniProtKB-KW"/>
</dbReference>
<dbReference type="Gene3D" id="2.10.22.10">
    <property type="entry name" value="Antistasin, domain 1"/>
    <property type="match status" value="6"/>
</dbReference>
<dbReference type="InterPro" id="IPR004094">
    <property type="entry name" value="Antistasin-like"/>
</dbReference>
<dbReference type="InterPro" id="IPR052624">
    <property type="entry name" value="CRIM1"/>
</dbReference>
<dbReference type="InterPro" id="IPR011061">
    <property type="entry name" value="Hirudin/antistatin"/>
</dbReference>
<dbReference type="PANTHER" id="PTHR46439">
    <property type="entry name" value="CYSTEINE-RICH MOTOR NEURON 1 PROTEIN"/>
    <property type="match status" value="1"/>
</dbReference>
<dbReference type="PANTHER" id="PTHR46439:SF1">
    <property type="entry name" value="CYSTEINE-RICH MOTOR NEURON 1 PROTEIN"/>
    <property type="match status" value="1"/>
</dbReference>
<dbReference type="Pfam" id="PF02822">
    <property type="entry name" value="Antistasin"/>
    <property type="match status" value="6"/>
</dbReference>
<dbReference type="SUPFAM" id="SSF57262">
    <property type="entry name" value="Leech antihemostatic proteins"/>
    <property type="match status" value="6"/>
</dbReference>
<dbReference type="PROSITE" id="PS51252">
    <property type="entry name" value="ANTISTASIN"/>
    <property type="match status" value="6"/>
</dbReference>
<protein>
    <recommendedName>
        <fullName>Antistasin</fullName>
        <shortName>ATS</shortName>
    </recommendedName>
    <alternativeName>
        <fullName>Blood coagulation factor Xa/proclotting enzyme inhibitor</fullName>
    </alternativeName>
</protein>
<reference key="1">
    <citation type="journal article" date="1992" name="FEBS Lett.">
        <title>The primitive metazoan Hydra expresses antistasin, a serine protease inhibitor of vertebrate blood coagulation: cDNA cloning, cellular localisation and developmental regulation.</title>
        <authorList>
            <person name="Holstein T.W."/>
            <person name="Mala C."/>
            <person name="Kurz E."/>
            <person name="Bauer K."/>
            <person name="Greber M."/>
            <person name="David C.N."/>
        </authorList>
    </citation>
    <scope>NUCLEOTIDE SEQUENCE [MRNA]</scope>
    <source>
        <strain>SF1</strain>
    </source>
</reference>
<sequence length="220" mass="25016">MNYLFVFLALSAAVTFANAECNKIQCRMFCKFGFQQDENGCDICKCAERPEKKCSNRYCKMLCPEGFQVDANGCQICRCKRSALEAPEKKCDGLKQCKMHCENGFVRDENGCPKCECSKCKQFQCLIFCPHGNEVDENGCKTCKCKAAPEKKKCDDLKQCRMFCENGFVRDENGCKKCECNKCKNFICQIFCEYGNVVDENGCKTCKCNSKPLKLSLHCR</sequence>
<accession>P38977</accession>
<feature type="signal peptide" evidence="2">
    <location>
        <begin position="1"/>
        <end position="19"/>
    </location>
</feature>
<feature type="chain" id="PRO_0000001699" description="Antistasin">
    <location>
        <begin position="20"/>
        <end position="220"/>
    </location>
</feature>
<feature type="domain" description="Antistasin-like 1" evidence="3">
    <location>
        <begin position="21"/>
        <end position="46"/>
    </location>
</feature>
<feature type="domain" description="Antistasin-like 2" evidence="3">
    <location>
        <begin position="54"/>
        <end position="79"/>
    </location>
</feature>
<feature type="domain" description="Antistasin-like 3" evidence="3">
    <location>
        <begin position="91"/>
        <end position="117"/>
    </location>
</feature>
<feature type="domain" description="Antistasin-like 4" evidence="3">
    <location>
        <begin position="120"/>
        <end position="145"/>
    </location>
</feature>
<feature type="domain" description="Antistasin-like 5" evidence="3">
    <location>
        <begin position="154"/>
        <end position="180"/>
    </location>
</feature>
<feature type="domain" description="Antistasin-like 6" evidence="3">
    <location>
        <begin position="183"/>
        <end position="208"/>
    </location>
</feature>
<feature type="site" description="Reactive bond" evidence="1">
    <location>
        <begin position="27"/>
        <end position="28"/>
    </location>
</feature>
<feature type="site" description="Reactive bond" evidence="1">
    <location>
        <begin position="60"/>
        <end position="61"/>
    </location>
</feature>
<feature type="site" description="Reactive bond" evidence="1">
    <location>
        <begin position="98"/>
        <end position="99"/>
    </location>
</feature>
<feature type="site" description="Reactive bond" evidence="1">
    <location>
        <begin position="161"/>
        <end position="162"/>
    </location>
</feature>